<proteinExistence type="inferred from homology"/>
<accession>Q31BA9</accession>
<protein>
    <recommendedName>
        <fullName evidence="1">Glutamyl-tRNA reductase</fullName>
        <shortName evidence="1">GluTR</shortName>
        <ecNumber evidence="1">1.2.1.70</ecNumber>
    </recommendedName>
</protein>
<dbReference type="EC" id="1.2.1.70" evidence="1"/>
<dbReference type="EMBL" id="CP000111">
    <property type="protein sequence ID" value="ABB49836.1"/>
    <property type="molecule type" value="Genomic_DNA"/>
</dbReference>
<dbReference type="RefSeq" id="WP_011376331.1">
    <property type="nucleotide sequence ID" value="NC_007577.1"/>
</dbReference>
<dbReference type="SMR" id="Q31BA9"/>
<dbReference type="STRING" id="74546.PMT9312_0776"/>
<dbReference type="KEGG" id="pmi:PMT9312_0776"/>
<dbReference type="eggNOG" id="COG0373">
    <property type="taxonomic scope" value="Bacteria"/>
</dbReference>
<dbReference type="HOGENOM" id="CLU_035113_2_1_3"/>
<dbReference type="OrthoDB" id="110209at2"/>
<dbReference type="UniPathway" id="UPA00251">
    <property type="reaction ID" value="UER00316"/>
</dbReference>
<dbReference type="UniPathway" id="UPA00668"/>
<dbReference type="Proteomes" id="UP000002715">
    <property type="component" value="Chromosome"/>
</dbReference>
<dbReference type="GO" id="GO:0008883">
    <property type="term" value="F:glutamyl-tRNA reductase activity"/>
    <property type="evidence" value="ECO:0007669"/>
    <property type="project" value="UniProtKB-UniRule"/>
</dbReference>
<dbReference type="GO" id="GO:0050661">
    <property type="term" value="F:NADP binding"/>
    <property type="evidence" value="ECO:0007669"/>
    <property type="project" value="InterPro"/>
</dbReference>
<dbReference type="GO" id="GO:0015995">
    <property type="term" value="P:chlorophyll biosynthetic process"/>
    <property type="evidence" value="ECO:0007669"/>
    <property type="project" value="UniProtKB-UniRule"/>
</dbReference>
<dbReference type="GO" id="GO:0006782">
    <property type="term" value="P:protoporphyrinogen IX biosynthetic process"/>
    <property type="evidence" value="ECO:0007669"/>
    <property type="project" value="UniProtKB-UniRule"/>
</dbReference>
<dbReference type="CDD" id="cd05213">
    <property type="entry name" value="NAD_bind_Glutamyl_tRNA_reduct"/>
    <property type="match status" value="1"/>
</dbReference>
<dbReference type="FunFam" id="3.30.460.30:FF:000001">
    <property type="entry name" value="Glutamyl-tRNA reductase"/>
    <property type="match status" value="1"/>
</dbReference>
<dbReference type="Gene3D" id="3.30.460.30">
    <property type="entry name" value="Glutamyl-tRNA reductase, N-terminal domain"/>
    <property type="match status" value="1"/>
</dbReference>
<dbReference type="Gene3D" id="3.40.50.720">
    <property type="entry name" value="NAD(P)-binding Rossmann-like Domain"/>
    <property type="match status" value="1"/>
</dbReference>
<dbReference type="HAMAP" id="MF_00087">
    <property type="entry name" value="Glu_tRNA_reductase"/>
    <property type="match status" value="1"/>
</dbReference>
<dbReference type="InterPro" id="IPR000343">
    <property type="entry name" value="4pyrrol_synth_GluRdtase"/>
</dbReference>
<dbReference type="InterPro" id="IPR015896">
    <property type="entry name" value="4pyrrol_synth_GluRdtase_dimer"/>
</dbReference>
<dbReference type="InterPro" id="IPR015895">
    <property type="entry name" value="4pyrrol_synth_GluRdtase_N"/>
</dbReference>
<dbReference type="InterPro" id="IPR018214">
    <property type="entry name" value="GluRdtase_CS"/>
</dbReference>
<dbReference type="InterPro" id="IPR036453">
    <property type="entry name" value="GluRdtase_dimer_dom_sf"/>
</dbReference>
<dbReference type="InterPro" id="IPR036343">
    <property type="entry name" value="GluRdtase_N_sf"/>
</dbReference>
<dbReference type="InterPro" id="IPR036291">
    <property type="entry name" value="NAD(P)-bd_dom_sf"/>
</dbReference>
<dbReference type="InterPro" id="IPR006151">
    <property type="entry name" value="Shikm_DH/Glu-tRNA_Rdtase"/>
</dbReference>
<dbReference type="NCBIfam" id="TIGR01035">
    <property type="entry name" value="hemA"/>
    <property type="match status" value="1"/>
</dbReference>
<dbReference type="NCBIfam" id="NF000744">
    <property type="entry name" value="PRK00045.1-3"/>
    <property type="match status" value="1"/>
</dbReference>
<dbReference type="PANTHER" id="PTHR43120">
    <property type="entry name" value="GLUTAMYL-TRNA REDUCTASE 1, CHLOROPLASTIC"/>
    <property type="match status" value="1"/>
</dbReference>
<dbReference type="PANTHER" id="PTHR43120:SF1">
    <property type="entry name" value="GLUTAMYL-TRNA REDUCTASE 1, CHLOROPLASTIC"/>
    <property type="match status" value="1"/>
</dbReference>
<dbReference type="Pfam" id="PF00745">
    <property type="entry name" value="GlutR_dimer"/>
    <property type="match status" value="1"/>
</dbReference>
<dbReference type="Pfam" id="PF05201">
    <property type="entry name" value="GlutR_N"/>
    <property type="match status" value="1"/>
</dbReference>
<dbReference type="Pfam" id="PF01488">
    <property type="entry name" value="Shikimate_DH"/>
    <property type="match status" value="1"/>
</dbReference>
<dbReference type="PIRSF" id="PIRSF000445">
    <property type="entry name" value="4pyrrol_synth_GluRdtase"/>
    <property type="match status" value="1"/>
</dbReference>
<dbReference type="SUPFAM" id="SSF69742">
    <property type="entry name" value="Glutamyl tRNA-reductase catalytic, N-terminal domain"/>
    <property type="match status" value="1"/>
</dbReference>
<dbReference type="SUPFAM" id="SSF69075">
    <property type="entry name" value="Glutamyl tRNA-reductase dimerization domain"/>
    <property type="match status" value="1"/>
</dbReference>
<dbReference type="SUPFAM" id="SSF51735">
    <property type="entry name" value="NAD(P)-binding Rossmann-fold domains"/>
    <property type="match status" value="1"/>
</dbReference>
<dbReference type="PROSITE" id="PS00747">
    <property type="entry name" value="GLUTR"/>
    <property type="match status" value="1"/>
</dbReference>
<organism>
    <name type="scientific">Prochlorococcus marinus (strain MIT 9312)</name>
    <dbReference type="NCBI Taxonomy" id="74546"/>
    <lineage>
        <taxon>Bacteria</taxon>
        <taxon>Bacillati</taxon>
        <taxon>Cyanobacteriota</taxon>
        <taxon>Cyanophyceae</taxon>
        <taxon>Synechococcales</taxon>
        <taxon>Prochlorococcaceae</taxon>
        <taxon>Prochlorococcus</taxon>
    </lineage>
</organism>
<keyword id="KW-0149">Chlorophyll biosynthesis</keyword>
<keyword id="KW-0521">NADP</keyword>
<keyword id="KW-0560">Oxidoreductase</keyword>
<keyword id="KW-0627">Porphyrin biosynthesis</keyword>
<gene>
    <name evidence="1" type="primary">hemA</name>
    <name type="ordered locus">PMT9312_0776</name>
</gene>
<name>HEM1_PROM9</name>
<reference key="1">
    <citation type="journal article" date="2006" name="Science">
        <title>Genomic islands and the ecology and evolution of Prochlorococcus.</title>
        <authorList>
            <person name="Coleman M.L."/>
            <person name="Sullivan M.B."/>
            <person name="Martiny A.C."/>
            <person name="Steglich C."/>
            <person name="Barry K."/>
            <person name="Delong E.F."/>
            <person name="Chisholm S.W."/>
        </authorList>
    </citation>
    <scope>NUCLEOTIDE SEQUENCE [LARGE SCALE GENOMIC DNA]</scope>
    <source>
        <strain>MIT 9312</strain>
    </source>
</reference>
<sequence length="436" mass="48723">MHIVVVGLSHRTAPVEVREKLSIPDQSITKSLKALKAFSEVLEVSILSTCNRLEIYALVKDKNTGISSIKEFISDYSGIIFEDLNPHLFCFRQEDAVLHLMKVSAGLDSLVLGEGQILSQVKKMMRLGQENQSTGPILNRLLTQSVSTGKKVRSETNLGTGAVSISSAAVELAQLKIGQEKGFDTLVSLESEKVLVVGAGRMSRLLITHLKAKGCHKLILVNRNIDRALNLAIDFPDIEIVCKGLNELDENISISSLVFTSTASEEPIIDLAKIEKLNLNNKLKFIDIGVPRNISNDVKNHQFVKSFDVDDLQEVVSRNQEFRQKIAKEAESLVEEERIIFLEWWASLEAVPVINKLRSDLELIRKEELQKALSRMGPDFSARERKVVEALTKGIINKILHTPVTKLRSPQSREERQASLKIVEKLFSLVDEDKNS</sequence>
<evidence type="ECO:0000255" key="1">
    <source>
        <dbReference type="HAMAP-Rule" id="MF_00087"/>
    </source>
</evidence>
<comment type="function">
    <text evidence="1">Catalyzes the NADPH-dependent reduction of glutamyl-tRNA(Glu) to glutamate 1-semialdehyde (GSA).</text>
</comment>
<comment type="catalytic activity">
    <reaction evidence="1">
        <text>(S)-4-amino-5-oxopentanoate + tRNA(Glu) + NADP(+) = L-glutamyl-tRNA(Glu) + NADPH + H(+)</text>
        <dbReference type="Rhea" id="RHEA:12344"/>
        <dbReference type="Rhea" id="RHEA-COMP:9663"/>
        <dbReference type="Rhea" id="RHEA-COMP:9680"/>
        <dbReference type="ChEBI" id="CHEBI:15378"/>
        <dbReference type="ChEBI" id="CHEBI:57501"/>
        <dbReference type="ChEBI" id="CHEBI:57783"/>
        <dbReference type="ChEBI" id="CHEBI:58349"/>
        <dbReference type="ChEBI" id="CHEBI:78442"/>
        <dbReference type="ChEBI" id="CHEBI:78520"/>
        <dbReference type="EC" id="1.2.1.70"/>
    </reaction>
</comment>
<comment type="pathway">
    <text evidence="1">Porphyrin-containing compound metabolism; protoporphyrin-IX biosynthesis; 5-aminolevulinate from L-glutamyl-tRNA(Glu): step 1/2.</text>
</comment>
<comment type="pathway">
    <text evidence="1">Porphyrin-containing compound metabolism; chlorophyll biosynthesis.</text>
</comment>
<comment type="subunit">
    <text evidence="1">Homodimer.</text>
</comment>
<comment type="domain">
    <text evidence="1">Possesses an unusual extended V-shaped dimeric structure with each monomer consisting of three distinct domains arranged along a curved 'spinal' alpha-helix. The N-terminal catalytic domain specifically recognizes the glutamate moiety of the substrate. The second domain is the NADPH-binding domain, and the third C-terminal domain is responsible for dimerization.</text>
</comment>
<comment type="miscellaneous">
    <text evidence="1">During catalysis, the active site Cys acts as a nucleophile attacking the alpha-carbonyl group of tRNA-bound glutamate with the formation of a thioester intermediate between enzyme and glutamate, and the concomitant release of tRNA(Glu). The thioester intermediate is finally reduced by direct hydride transfer from NADPH, to form the product GSA.</text>
</comment>
<comment type="similarity">
    <text evidence="1">Belongs to the glutamyl-tRNA reductase family.</text>
</comment>
<feature type="chain" id="PRO_1000004665" description="Glutamyl-tRNA reductase">
    <location>
        <begin position="1"/>
        <end position="436"/>
    </location>
</feature>
<feature type="active site" description="Nucleophile" evidence="1">
    <location>
        <position position="50"/>
    </location>
</feature>
<feature type="binding site" evidence="1">
    <location>
        <begin position="49"/>
        <end position="52"/>
    </location>
    <ligand>
        <name>substrate</name>
    </ligand>
</feature>
<feature type="binding site" evidence="1">
    <location>
        <position position="109"/>
    </location>
    <ligand>
        <name>substrate</name>
    </ligand>
</feature>
<feature type="binding site" evidence="1">
    <location>
        <begin position="114"/>
        <end position="116"/>
    </location>
    <ligand>
        <name>substrate</name>
    </ligand>
</feature>
<feature type="binding site" evidence="1">
    <location>
        <position position="120"/>
    </location>
    <ligand>
        <name>substrate</name>
    </ligand>
</feature>
<feature type="binding site" evidence="1">
    <location>
        <begin position="198"/>
        <end position="203"/>
    </location>
    <ligand>
        <name>NADP(+)</name>
        <dbReference type="ChEBI" id="CHEBI:58349"/>
    </ligand>
</feature>
<feature type="site" description="Important for activity" evidence="1">
    <location>
        <position position="99"/>
    </location>
</feature>